<feature type="chain" id="PRO_0000367455" description="RNA polymerase sigma factor SigS">
    <location>
        <begin position="1"/>
        <end position="156"/>
    </location>
</feature>
<feature type="DNA-binding region" description="H-T-H motif" evidence="1">
    <location>
        <begin position="126"/>
        <end position="145"/>
    </location>
</feature>
<feature type="short sequence motif" description="Polymerase core binding">
    <location>
        <begin position="29"/>
        <end position="44"/>
    </location>
</feature>
<evidence type="ECO:0000250" key="1"/>
<evidence type="ECO:0000305" key="2"/>
<accession>A6QHV8</accession>
<reference key="1">
    <citation type="journal article" date="2008" name="J. Bacteriol.">
        <title>Genome sequence of Staphylococcus aureus strain Newman and comparative analysis of staphylococcal genomes: polymorphism and evolution of two major pathogenicity islands.</title>
        <authorList>
            <person name="Baba T."/>
            <person name="Bae T."/>
            <person name="Schneewind O."/>
            <person name="Takeuchi F."/>
            <person name="Hiramatsu K."/>
        </authorList>
    </citation>
    <scope>NUCLEOTIDE SEQUENCE [LARGE SCALE GENOMIC DNA]</scope>
    <source>
        <strain>Newman</strain>
    </source>
</reference>
<sequence length="156" mass="19136">MKFNDVYNKHHKIIHHLLKKYNISYNYDEYYQLLLIKMWQLSQIYKPSSKQSLSSFLFTRLNFYLIDLFRQQNQLKDVILCENNSPTLTEQPTYFNEHDLRLQDIFKLLNQRERLWLKLYLEGYKQFEIAEIMSLSLSTIKLIKMSVKRKCQHNFN</sequence>
<gene>
    <name type="primary">sigS</name>
    <name type="ordered locus">NWMN_1668</name>
</gene>
<protein>
    <recommendedName>
        <fullName>RNA polymerase sigma factor SigS</fullName>
    </recommendedName>
</protein>
<dbReference type="EMBL" id="AP009351">
    <property type="protein sequence ID" value="BAF67940.1"/>
    <property type="molecule type" value="Genomic_DNA"/>
</dbReference>
<dbReference type="RefSeq" id="WP_000671052.1">
    <property type="nucleotide sequence ID" value="NZ_JBBIAE010000009.1"/>
</dbReference>
<dbReference type="SMR" id="A6QHV8"/>
<dbReference type="KEGG" id="sae:NWMN_1668"/>
<dbReference type="HOGENOM" id="CLU_047691_20_2_9"/>
<dbReference type="Proteomes" id="UP000006386">
    <property type="component" value="Chromosome"/>
</dbReference>
<dbReference type="GO" id="GO:0003677">
    <property type="term" value="F:DNA binding"/>
    <property type="evidence" value="ECO:0007669"/>
    <property type="project" value="UniProtKB-KW"/>
</dbReference>
<dbReference type="GO" id="GO:0016987">
    <property type="term" value="F:sigma factor activity"/>
    <property type="evidence" value="ECO:0007669"/>
    <property type="project" value="UniProtKB-KW"/>
</dbReference>
<dbReference type="GO" id="GO:0006352">
    <property type="term" value="P:DNA-templated transcription initiation"/>
    <property type="evidence" value="ECO:0007669"/>
    <property type="project" value="InterPro"/>
</dbReference>
<dbReference type="Gene3D" id="1.10.10.10">
    <property type="entry name" value="Winged helix-like DNA-binding domain superfamily/Winged helix DNA-binding domain"/>
    <property type="match status" value="1"/>
</dbReference>
<dbReference type="InterPro" id="IPR014284">
    <property type="entry name" value="RNA_pol_sigma-70_dom"/>
</dbReference>
<dbReference type="InterPro" id="IPR007627">
    <property type="entry name" value="RNA_pol_sigma70_r2"/>
</dbReference>
<dbReference type="InterPro" id="IPR013325">
    <property type="entry name" value="RNA_pol_sigma_r2"/>
</dbReference>
<dbReference type="InterPro" id="IPR016032">
    <property type="entry name" value="Sig_transdc_resp-reg_C-effctor"/>
</dbReference>
<dbReference type="InterPro" id="IPR036388">
    <property type="entry name" value="WH-like_DNA-bd_sf"/>
</dbReference>
<dbReference type="NCBIfam" id="TIGR02937">
    <property type="entry name" value="sigma70-ECF"/>
    <property type="match status" value="1"/>
</dbReference>
<dbReference type="Pfam" id="PF04542">
    <property type="entry name" value="Sigma70_r2"/>
    <property type="match status" value="1"/>
</dbReference>
<dbReference type="SUPFAM" id="SSF46894">
    <property type="entry name" value="C-terminal effector domain of the bipartite response regulators"/>
    <property type="match status" value="1"/>
</dbReference>
<dbReference type="SUPFAM" id="SSF88946">
    <property type="entry name" value="Sigma2 domain of RNA polymerase sigma factors"/>
    <property type="match status" value="1"/>
</dbReference>
<name>SIGS_STAAE</name>
<comment type="function">
    <text evidence="1">Sigma factors are initiation factors that promote the attachment of RNA polymerase to specific initiation sites and are then released. Sigma-S contributes to the protection against external stress, thus playing a role in cellular fitness and survival (By similarity).</text>
</comment>
<comment type="similarity">
    <text evidence="2">Belongs to the sigma-70 factor family.</text>
</comment>
<organism>
    <name type="scientific">Staphylococcus aureus (strain Newman)</name>
    <dbReference type="NCBI Taxonomy" id="426430"/>
    <lineage>
        <taxon>Bacteria</taxon>
        <taxon>Bacillati</taxon>
        <taxon>Bacillota</taxon>
        <taxon>Bacilli</taxon>
        <taxon>Bacillales</taxon>
        <taxon>Staphylococcaceae</taxon>
        <taxon>Staphylococcus</taxon>
    </lineage>
</organism>
<proteinExistence type="inferred from homology"/>
<keyword id="KW-0238">DNA-binding</keyword>
<keyword id="KW-0731">Sigma factor</keyword>
<keyword id="KW-0804">Transcription</keyword>
<keyword id="KW-0805">Transcription regulation</keyword>